<sequence>MAKKVEAYIKLQVAAGMANPSPPVGPALGQHGVNIMEFCKAFNAKTESIEKGLPIPVVISVYNDRSFTFVTKTPPAAVLLKKAAGVKSGSGRPNTEKVGTVTDAQLQEIAETKAADMTGADIEAMKRSIAGTARSMGLVVEG</sequence>
<dbReference type="EMBL" id="CP001139">
    <property type="protein sequence ID" value="ACH66029.1"/>
    <property type="molecule type" value="Genomic_DNA"/>
</dbReference>
<dbReference type="RefSeq" id="WP_005421326.1">
    <property type="nucleotide sequence ID" value="NC_011184.1"/>
</dbReference>
<dbReference type="SMR" id="B5FC92"/>
<dbReference type="GeneID" id="54165133"/>
<dbReference type="KEGG" id="vfm:VFMJ11_2534"/>
<dbReference type="HOGENOM" id="CLU_074237_2_0_6"/>
<dbReference type="Proteomes" id="UP000001857">
    <property type="component" value="Chromosome I"/>
</dbReference>
<dbReference type="GO" id="GO:0022625">
    <property type="term" value="C:cytosolic large ribosomal subunit"/>
    <property type="evidence" value="ECO:0007669"/>
    <property type="project" value="TreeGrafter"/>
</dbReference>
<dbReference type="GO" id="GO:0070180">
    <property type="term" value="F:large ribosomal subunit rRNA binding"/>
    <property type="evidence" value="ECO:0007669"/>
    <property type="project" value="UniProtKB-UniRule"/>
</dbReference>
<dbReference type="GO" id="GO:0003735">
    <property type="term" value="F:structural constituent of ribosome"/>
    <property type="evidence" value="ECO:0007669"/>
    <property type="project" value="InterPro"/>
</dbReference>
<dbReference type="GO" id="GO:0006412">
    <property type="term" value="P:translation"/>
    <property type="evidence" value="ECO:0007669"/>
    <property type="project" value="UniProtKB-UniRule"/>
</dbReference>
<dbReference type="CDD" id="cd00349">
    <property type="entry name" value="Ribosomal_L11"/>
    <property type="match status" value="1"/>
</dbReference>
<dbReference type="FunFam" id="1.10.10.250:FF:000001">
    <property type="entry name" value="50S ribosomal protein L11"/>
    <property type="match status" value="1"/>
</dbReference>
<dbReference type="FunFam" id="3.30.1550.10:FF:000001">
    <property type="entry name" value="50S ribosomal protein L11"/>
    <property type="match status" value="1"/>
</dbReference>
<dbReference type="Gene3D" id="1.10.10.250">
    <property type="entry name" value="Ribosomal protein L11, C-terminal domain"/>
    <property type="match status" value="1"/>
</dbReference>
<dbReference type="Gene3D" id="3.30.1550.10">
    <property type="entry name" value="Ribosomal protein L11/L12, N-terminal domain"/>
    <property type="match status" value="1"/>
</dbReference>
<dbReference type="HAMAP" id="MF_00736">
    <property type="entry name" value="Ribosomal_uL11"/>
    <property type="match status" value="1"/>
</dbReference>
<dbReference type="InterPro" id="IPR000911">
    <property type="entry name" value="Ribosomal_uL11"/>
</dbReference>
<dbReference type="InterPro" id="IPR006519">
    <property type="entry name" value="Ribosomal_uL11_bac-typ"/>
</dbReference>
<dbReference type="InterPro" id="IPR020783">
    <property type="entry name" value="Ribosomal_uL11_C"/>
</dbReference>
<dbReference type="InterPro" id="IPR036769">
    <property type="entry name" value="Ribosomal_uL11_C_sf"/>
</dbReference>
<dbReference type="InterPro" id="IPR020785">
    <property type="entry name" value="Ribosomal_uL11_CS"/>
</dbReference>
<dbReference type="InterPro" id="IPR020784">
    <property type="entry name" value="Ribosomal_uL11_N"/>
</dbReference>
<dbReference type="InterPro" id="IPR036796">
    <property type="entry name" value="Ribosomal_uL11_N_sf"/>
</dbReference>
<dbReference type="NCBIfam" id="TIGR01632">
    <property type="entry name" value="L11_bact"/>
    <property type="match status" value="1"/>
</dbReference>
<dbReference type="PANTHER" id="PTHR11661">
    <property type="entry name" value="60S RIBOSOMAL PROTEIN L12"/>
    <property type="match status" value="1"/>
</dbReference>
<dbReference type="PANTHER" id="PTHR11661:SF1">
    <property type="entry name" value="LARGE RIBOSOMAL SUBUNIT PROTEIN UL11M"/>
    <property type="match status" value="1"/>
</dbReference>
<dbReference type="Pfam" id="PF00298">
    <property type="entry name" value="Ribosomal_L11"/>
    <property type="match status" value="1"/>
</dbReference>
<dbReference type="Pfam" id="PF03946">
    <property type="entry name" value="Ribosomal_L11_N"/>
    <property type="match status" value="1"/>
</dbReference>
<dbReference type="SMART" id="SM00649">
    <property type="entry name" value="RL11"/>
    <property type="match status" value="1"/>
</dbReference>
<dbReference type="SUPFAM" id="SSF54747">
    <property type="entry name" value="Ribosomal L11/L12e N-terminal domain"/>
    <property type="match status" value="1"/>
</dbReference>
<dbReference type="SUPFAM" id="SSF46906">
    <property type="entry name" value="Ribosomal protein L11, C-terminal domain"/>
    <property type="match status" value="1"/>
</dbReference>
<dbReference type="PROSITE" id="PS00359">
    <property type="entry name" value="RIBOSOMAL_L11"/>
    <property type="match status" value="1"/>
</dbReference>
<protein>
    <recommendedName>
        <fullName evidence="1">Large ribosomal subunit protein uL11</fullName>
    </recommendedName>
    <alternativeName>
        <fullName evidence="2">50S ribosomal protein L11</fullName>
    </alternativeName>
</protein>
<feature type="chain" id="PRO_1000195745" description="Large ribosomal subunit protein uL11">
    <location>
        <begin position="1"/>
        <end position="142"/>
    </location>
</feature>
<reference key="1">
    <citation type="submission" date="2008-08" db="EMBL/GenBank/DDBJ databases">
        <title>Complete sequence of Vibrio fischeri strain MJ11.</title>
        <authorList>
            <person name="Mandel M.J."/>
            <person name="Stabb E.V."/>
            <person name="Ruby E.G."/>
            <person name="Ferriera S."/>
            <person name="Johnson J."/>
            <person name="Kravitz S."/>
            <person name="Beeson K."/>
            <person name="Sutton G."/>
            <person name="Rogers Y.-H."/>
            <person name="Friedman R."/>
            <person name="Frazier M."/>
            <person name="Venter J.C."/>
        </authorList>
    </citation>
    <scope>NUCLEOTIDE SEQUENCE [LARGE SCALE GENOMIC DNA]</scope>
    <source>
        <strain>MJ11</strain>
    </source>
</reference>
<keyword id="KW-0488">Methylation</keyword>
<keyword id="KW-0687">Ribonucleoprotein</keyword>
<keyword id="KW-0689">Ribosomal protein</keyword>
<keyword id="KW-0694">RNA-binding</keyword>
<keyword id="KW-0699">rRNA-binding</keyword>
<name>RL11_ALIFM</name>
<proteinExistence type="inferred from homology"/>
<comment type="function">
    <text evidence="1">Forms part of the ribosomal stalk which helps the ribosome interact with GTP-bound translation factors.</text>
</comment>
<comment type="subunit">
    <text evidence="1">Part of the ribosomal stalk of the 50S ribosomal subunit. Interacts with L10 and the large rRNA to form the base of the stalk. L10 forms an elongated spine to which L12 dimers bind in a sequential fashion forming a multimeric L10(L12)X complex.</text>
</comment>
<comment type="PTM">
    <text evidence="1">One or more lysine residues are methylated.</text>
</comment>
<comment type="similarity">
    <text evidence="1">Belongs to the universal ribosomal protein uL11 family.</text>
</comment>
<accession>B5FC92</accession>
<gene>
    <name evidence="1" type="primary">rplK</name>
    <name type="ordered locus">VFMJ11_2534</name>
</gene>
<organism>
    <name type="scientific">Aliivibrio fischeri (strain MJ11)</name>
    <name type="common">Vibrio fischeri</name>
    <dbReference type="NCBI Taxonomy" id="388396"/>
    <lineage>
        <taxon>Bacteria</taxon>
        <taxon>Pseudomonadati</taxon>
        <taxon>Pseudomonadota</taxon>
        <taxon>Gammaproteobacteria</taxon>
        <taxon>Vibrionales</taxon>
        <taxon>Vibrionaceae</taxon>
        <taxon>Aliivibrio</taxon>
    </lineage>
</organism>
<evidence type="ECO:0000255" key="1">
    <source>
        <dbReference type="HAMAP-Rule" id="MF_00736"/>
    </source>
</evidence>
<evidence type="ECO:0000305" key="2"/>